<reference key="1">
    <citation type="journal article" date="2005" name="Nature">
        <title>Genome sequencing and analysis of Aspergillus oryzae.</title>
        <authorList>
            <person name="Machida M."/>
            <person name="Asai K."/>
            <person name="Sano M."/>
            <person name="Tanaka T."/>
            <person name="Kumagai T."/>
            <person name="Terai G."/>
            <person name="Kusumoto K."/>
            <person name="Arima T."/>
            <person name="Akita O."/>
            <person name="Kashiwagi Y."/>
            <person name="Abe K."/>
            <person name="Gomi K."/>
            <person name="Horiuchi H."/>
            <person name="Kitamoto K."/>
            <person name="Kobayashi T."/>
            <person name="Takeuchi M."/>
            <person name="Denning D.W."/>
            <person name="Galagan J.E."/>
            <person name="Nierman W.C."/>
            <person name="Yu J."/>
            <person name="Archer D.B."/>
            <person name="Bennett J.W."/>
            <person name="Bhatnagar D."/>
            <person name="Cleveland T.E."/>
            <person name="Fedorova N.D."/>
            <person name="Gotoh O."/>
            <person name="Horikawa H."/>
            <person name="Hosoyama A."/>
            <person name="Ichinomiya M."/>
            <person name="Igarashi R."/>
            <person name="Iwashita K."/>
            <person name="Juvvadi P.R."/>
            <person name="Kato M."/>
            <person name="Kato Y."/>
            <person name="Kin T."/>
            <person name="Kokubun A."/>
            <person name="Maeda H."/>
            <person name="Maeyama N."/>
            <person name="Maruyama J."/>
            <person name="Nagasaki H."/>
            <person name="Nakajima T."/>
            <person name="Oda K."/>
            <person name="Okada K."/>
            <person name="Paulsen I."/>
            <person name="Sakamoto K."/>
            <person name="Sawano T."/>
            <person name="Takahashi M."/>
            <person name="Takase K."/>
            <person name="Terabayashi Y."/>
            <person name="Wortman J.R."/>
            <person name="Yamada O."/>
            <person name="Yamagata Y."/>
            <person name="Anazawa H."/>
            <person name="Hata Y."/>
            <person name="Koide Y."/>
            <person name="Komori T."/>
            <person name="Koyama Y."/>
            <person name="Minetoki T."/>
            <person name="Suharnan S."/>
            <person name="Tanaka A."/>
            <person name="Isono K."/>
            <person name="Kuhara S."/>
            <person name="Ogasawara N."/>
            <person name="Kikuchi H."/>
        </authorList>
    </citation>
    <scope>NUCLEOTIDE SEQUENCE [LARGE SCALE GENOMIC DNA]</scope>
    <source>
        <strain>ATCC 42149 / RIB 40</strain>
    </source>
</reference>
<comment type="function">
    <text evidence="1">Component of the NOP7 complex, which is required for maturation of the 25S and 5.8S ribosomal RNAs and formation of the 60S ribosome.</text>
</comment>
<comment type="subunit">
    <text evidence="1">Component of the NOP7 complex, composed of erb1, nop7 and ytm1. The complex is held together by erb1, which interacts with nop7 via its N-terminal domain and with ytm1 via a high-affinity interaction between the seven-bladed beta-propeller domains of the 2 proteins. The NOP7 complex associates with the 66S pre-ribosome.</text>
</comment>
<comment type="subcellular location">
    <subcellularLocation>
        <location evidence="1">Nucleus</location>
        <location evidence="1">Nucleolus</location>
    </subcellularLocation>
    <subcellularLocation>
        <location evidence="1">Nucleus</location>
        <location evidence="1">Nucleoplasm</location>
    </subcellularLocation>
</comment>
<comment type="similarity">
    <text evidence="1">Belongs to the WD repeat BOP1/ERB1 family.</text>
</comment>
<evidence type="ECO:0000255" key="1">
    <source>
        <dbReference type="HAMAP-Rule" id="MF_03027"/>
    </source>
</evidence>
<evidence type="ECO:0000256" key="2">
    <source>
        <dbReference type="SAM" id="MobiDB-lite"/>
    </source>
</evidence>
<feature type="chain" id="PRO_0000370420" description="Ribosome biogenesis protein erb1">
    <location>
        <begin position="1"/>
        <end position="783"/>
    </location>
</feature>
<feature type="repeat" description="WD 1">
    <location>
        <begin position="421"/>
        <end position="460"/>
    </location>
</feature>
<feature type="repeat" description="WD 2">
    <location>
        <begin position="464"/>
        <end position="504"/>
    </location>
</feature>
<feature type="repeat" description="WD 3">
    <location>
        <begin position="555"/>
        <end position="600"/>
    </location>
</feature>
<feature type="repeat" description="WD 4">
    <location>
        <begin position="606"/>
        <end position="644"/>
    </location>
</feature>
<feature type="repeat" description="WD 5">
    <location>
        <begin position="647"/>
        <end position="692"/>
    </location>
</feature>
<feature type="repeat" description="WD 6">
    <location>
        <begin position="696"/>
        <end position="737"/>
    </location>
</feature>
<feature type="repeat" description="WD 7">
    <location>
        <begin position="753"/>
        <end position="783"/>
    </location>
</feature>
<feature type="region of interest" description="Disordered" evidence="2">
    <location>
        <begin position="1"/>
        <end position="133"/>
    </location>
</feature>
<feature type="region of interest" description="Disordered" evidence="2">
    <location>
        <begin position="302"/>
        <end position="352"/>
    </location>
</feature>
<feature type="compositionally biased region" description="Basic residues" evidence="2">
    <location>
        <begin position="1"/>
        <end position="12"/>
    </location>
</feature>
<feature type="compositionally biased region" description="Acidic residues" evidence="2">
    <location>
        <begin position="46"/>
        <end position="80"/>
    </location>
</feature>
<feature type="compositionally biased region" description="Basic and acidic residues" evidence="2">
    <location>
        <begin position="110"/>
        <end position="123"/>
    </location>
</feature>
<feature type="compositionally biased region" description="Pro residues" evidence="2">
    <location>
        <begin position="313"/>
        <end position="330"/>
    </location>
</feature>
<feature type="compositionally biased region" description="Basic and acidic residues" evidence="2">
    <location>
        <begin position="331"/>
        <end position="352"/>
    </location>
</feature>
<proteinExistence type="inferred from homology"/>
<accession>Q2UPK0</accession>
<keyword id="KW-0539">Nucleus</keyword>
<keyword id="KW-1185">Reference proteome</keyword>
<keyword id="KW-0677">Repeat</keyword>
<keyword id="KW-0690">Ribosome biogenesis</keyword>
<keyword id="KW-0698">rRNA processing</keyword>
<keyword id="KW-0853">WD repeat</keyword>
<organism>
    <name type="scientific">Aspergillus oryzae (strain ATCC 42149 / RIB 40)</name>
    <name type="common">Yellow koji mold</name>
    <dbReference type="NCBI Taxonomy" id="510516"/>
    <lineage>
        <taxon>Eukaryota</taxon>
        <taxon>Fungi</taxon>
        <taxon>Dikarya</taxon>
        <taxon>Ascomycota</taxon>
        <taxon>Pezizomycotina</taxon>
        <taxon>Eurotiomycetes</taxon>
        <taxon>Eurotiomycetidae</taxon>
        <taxon>Eurotiales</taxon>
        <taxon>Aspergillaceae</taxon>
        <taxon>Aspergillus</taxon>
        <taxon>Aspergillus subgen. Circumdati</taxon>
    </lineage>
</organism>
<dbReference type="EMBL" id="BA000049">
    <property type="protein sequence ID" value="BAE56515.1"/>
    <property type="molecule type" value="Genomic_DNA"/>
</dbReference>
<dbReference type="SMR" id="Q2UPK0"/>
<dbReference type="STRING" id="510516.Q2UPK0"/>
<dbReference type="EnsemblFungi" id="BAE56515">
    <property type="protein sequence ID" value="BAE56515"/>
    <property type="gene ID" value="AO090005001611"/>
</dbReference>
<dbReference type="HOGENOM" id="CLU_011390_0_1_1"/>
<dbReference type="OMA" id="MRPAKGE"/>
<dbReference type="Proteomes" id="UP000006564">
    <property type="component" value="Chromosome 1"/>
</dbReference>
<dbReference type="GO" id="GO:0005654">
    <property type="term" value="C:nucleoplasm"/>
    <property type="evidence" value="ECO:0007669"/>
    <property type="project" value="UniProtKB-SubCell"/>
</dbReference>
<dbReference type="GO" id="GO:0070545">
    <property type="term" value="C:PeBoW complex"/>
    <property type="evidence" value="ECO:0007669"/>
    <property type="project" value="EnsemblFungi"/>
</dbReference>
<dbReference type="GO" id="GO:0030687">
    <property type="term" value="C:preribosome, large subunit precursor"/>
    <property type="evidence" value="ECO:0007669"/>
    <property type="project" value="UniProtKB-UniRule"/>
</dbReference>
<dbReference type="GO" id="GO:0070180">
    <property type="term" value="F:large ribosomal subunit rRNA binding"/>
    <property type="evidence" value="ECO:0007669"/>
    <property type="project" value="EnsemblFungi"/>
</dbReference>
<dbReference type="GO" id="GO:0043021">
    <property type="term" value="F:ribonucleoprotein complex binding"/>
    <property type="evidence" value="ECO:0007669"/>
    <property type="project" value="UniProtKB-UniRule"/>
</dbReference>
<dbReference type="GO" id="GO:0000466">
    <property type="term" value="P:maturation of 5.8S rRNA from tricistronic rRNA transcript (SSU-rRNA, 5.8S rRNA, LSU-rRNA)"/>
    <property type="evidence" value="ECO:0007669"/>
    <property type="project" value="UniProtKB-UniRule"/>
</dbReference>
<dbReference type="GO" id="GO:0000463">
    <property type="term" value="P:maturation of LSU-rRNA from tricistronic rRNA transcript (SSU-rRNA, 5.8S rRNA, LSU-rRNA)"/>
    <property type="evidence" value="ECO:0007669"/>
    <property type="project" value="UniProtKB-UniRule"/>
</dbReference>
<dbReference type="FunFam" id="2.130.10.10:FF:000061">
    <property type="entry name" value="Ribosome biogenesis protein BOP1 homolog"/>
    <property type="match status" value="1"/>
</dbReference>
<dbReference type="Gene3D" id="2.130.10.10">
    <property type="entry name" value="YVTN repeat-like/Quinoprotein amine dehydrogenase"/>
    <property type="match status" value="1"/>
</dbReference>
<dbReference type="HAMAP" id="MF_03027">
    <property type="entry name" value="BOP1"/>
    <property type="match status" value="1"/>
</dbReference>
<dbReference type="InterPro" id="IPR028598">
    <property type="entry name" value="BOP1/Erb1"/>
</dbReference>
<dbReference type="InterPro" id="IPR012953">
    <property type="entry name" value="BOP1_N_dom"/>
</dbReference>
<dbReference type="InterPro" id="IPR015943">
    <property type="entry name" value="WD40/YVTN_repeat-like_dom_sf"/>
</dbReference>
<dbReference type="InterPro" id="IPR019775">
    <property type="entry name" value="WD40_repeat_CS"/>
</dbReference>
<dbReference type="InterPro" id="IPR036322">
    <property type="entry name" value="WD40_repeat_dom_sf"/>
</dbReference>
<dbReference type="InterPro" id="IPR001680">
    <property type="entry name" value="WD40_rpt"/>
</dbReference>
<dbReference type="PANTHER" id="PTHR17605:SF0">
    <property type="entry name" value="RIBOSOME BIOGENESIS PROTEIN BOP1"/>
    <property type="match status" value="1"/>
</dbReference>
<dbReference type="PANTHER" id="PTHR17605">
    <property type="entry name" value="RIBOSOME BIOGENESIS PROTEIN BOP1 BLOCK OF PROLIFERATION 1 PROTEIN"/>
    <property type="match status" value="1"/>
</dbReference>
<dbReference type="Pfam" id="PF08145">
    <property type="entry name" value="BOP1NT"/>
    <property type="match status" value="1"/>
</dbReference>
<dbReference type="Pfam" id="PF00400">
    <property type="entry name" value="WD40"/>
    <property type="match status" value="3"/>
</dbReference>
<dbReference type="SMART" id="SM01035">
    <property type="entry name" value="BOP1NT"/>
    <property type="match status" value="1"/>
</dbReference>
<dbReference type="SMART" id="SM00320">
    <property type="entry name" value="WD40"/>
    <property type="match status" value="5"/>
</dbReference>
<dbReference type="SUPFAM" id="SSF50978">
    <property type="entry name" value="WD40 repeat-like"/>
    <property type="match status" value="1"/>
</dbReference>
<dbReference type="PROSITE" id="PS00678">
    <property type="entry name" value="WD_REPEATS_1"/>
    <property type="match status" value="1"/>
</dbReference>
<dbReference type="PROSITE" id="PS50082">
    <property type="entry name" value="WD_REPEATS_2"/>
    <property type="match status" value="2"/>
</dbReference>
<dbReference type="PROSITE" id="PS50294">
    <property type="entry name" value="WD_REPEATS_REGION"/>
    <property type="match status" value="2"/>
</dbReference>
<sequence>MDASKSSKKRKAVTRDVEEEAGVFSGDELQVDVLDGALSDNANDLSSDEDVSDSEIELVDDFSDEEDGDEEEELDSDEIPSDGGESFKKASGTGNARDESSSDEEQLNYRIEKDANGNDRYVYDEINPDDNSDYSDVEENANTIGNIPLSFYDQYPHIGYDINGKKIMRPATGEALDALLDSIEIPKGWTGLTDPSTGKPLELSQDELELLRKVQMNEIPEEGYNPYEPTVEWFSSKQEIMPLSAAPEPKRRFVPSKHEAKRVMKIVKAIREGRILPYKPPTEEEDKEQDVVNYDLWADETERPDHPMHIPAPKLPPPGYEESYHPPPEYLPDKKERKAWEEADPEDREREYLPNDFGSLRKVPGYESFVKEKFERCLDLYLAPRVRRSKLNIDPESLLPKLPSPEELKPFPTACATVFRGHKGRVRTLAVDPSGLWLATGGDDGTARVWELLTGRQLWSVKLSEEDPVNVVRWRPGKDAVILAAAAGDDIFLAVPPIADPKIEKTSLEIIDAGWGYAASKPPPSAAEENKKNVPPQWIRPSLSLAESGVCAVIPLRYVVKSLSWHRRGDYFVTVCPGSSTPASVAISIHTLSKHLTQFPFRRRIKGGGPPQTAHFHPSKPILFVANQRTIRAYDLSRQLLVKIIQPGARWISSFDIHPTSSTASGGDNLIVGSYDRRLLWHDLELSQRPYKTLRYHRKAIRSVRFHPSGRYPLFADASDDGSLQIFHGSVTGDMLSNASIVPLKVLKGHKITGELGVLDVDWHPREAWCVSAGADGTCRLWM</sequence>
<name>ERB1_ASPOR</name>
<gene>
    <name type="primary">erb1</name>
    <name type="ORF">AO090005001611</name>
</gene>
<protein>
    <recommendedName>
        <fullName evidence="1">Ribosome biogenesis protein erb1</fullName>
    </recommendedName>
    <alternativeName>
        <fullName evidence="1">Eukaryotic ribosome biogenesis protein 1</fullName>
    </alternativeName>
</protein>